<comment type="subunit">
    <text>Forms oligomeric structures.</text>
</comment>
<comment type="subcellular location">
    <subcellularLocation>
        <location>Cytoplasm</location>
    </subcellularLocation>
</comment>
<comment type="similarity">
    <text evidence="1">Belongs to the small heat shock protein (HSP20) family.</text>
</comment>
<proteinExistence type="inferred from homology"/>
<sequence>MSLIPSFFGGRRSSVFDPFSLDVWDPFKDFPFPSSLSAENSAFVSTRVDWKETPEAHVFKADIPGLKKEEVKLEIQDGRVLQISGERNVEKEDKNDTWHRVERSSGKLVRRFRLPENAKVDQVKASMENGVLTVTVPKEEIKKPDVKAIDISG</sequence>
<name>HSP11_SOYBN</name>
<dbReference type="EMBL" id="X01104">
    <property type="protein sequence ID" value="CAA25578.1"/>
    <property type="molecule type" value="Genomic_DNA"/>
</dbReference>
<dbReference type="PIR" id="A02922">
    <property type="entry name" value="HHSY17"/>
</dbReference>
<dbReference type="RefSeq" id="NP_001235293.1">
    <property type="nucleotide sequence ID" value="NM_001248364.2"/>
</dbReference>
<dbReference type="SMR" id="P02519"/>
<dbReference type="FunCoup" id="P02519">
    <property type="interactions" value="335"/>
</dbReference>
<dbReference type="STRING" id="3847.P02519"/>
<dbReference type="PaxDb" id="3847-GLYMA08G07350.1"/>
<dbReference type="EnsemblPlants" id="KRH42105">
    <property type="protein sequence ID" value="KRH42105"/>
    <property type="gene ID" value="GLYMA_08G069000"/>
</dbReference>
<dbReference type="GeneID" id="100526870"/>
<dbReference type="Gramene" id="KRH42105">
    <property type="protein sequence ID" value="KRH42105"/>
    <property type="gene ID" value="GLYMA_08G069000"/>
</dbReference>
<dbReference type="KEGG" id="gmx:100526870"/>
<dbReference type="eggNOG" id="KOG0710">
    <property type="taxonomic scope" value="Eukaryota"/>
</dbReference>
<dbReference type="HOGENOM" id="CLU_046737_5_0_1"/>
<dbReference type="InParanoid" id="P02519"/>
<dbReference type="OMA" id="NDAWHRV"/>
<dbReference type="OrthoDB" id="5511210at2759"/>
<dbReference type="Proteomes" id="UP000008827">
    <property type="component" value="Chromosome 8"/>
</dbReference>
<dbReference type="GO" id="GO:0005737">
    <property type="term" value="C:cytoplasm"/>
    <property type="evidence" value="ECO:0007669"/>
    <property type="project" value="UniProtKB-SubCell"/>
</dbReference>
<dbReference type="GO" id="GO:0051082">
    <property type="term" value="F:unfolded protein binding"/>
    <property type="evidence" value="ECO:0000318"/>
    <property type="project" value="GO_Central"/>
</dbReference>
<dbReference type="GO" id="GO:0051259">
    <property type="term" value="P:protein complex oligomerization"/>
    <property type="evidence" value="ECO:0000318"/>
    <property type="project" value="GO_Central"/>
</dbReference>
<dbReference type="GO" id="GO:0006457">
    <property type="term" value="P:protein folding"/>
    <property type="evidence" value="ECO:0000318"/>
    <property type="project" value="GO_Central"/>
</dbReference>
<dbReference type="GO" id="GO:0009408">
    <property type="term" value="P:response to heat"/>
    <property type="evidence" value="ECO:0000318"/>
    <property type="project" value="GO_Central"/>
</dbReference>
<dbReference type="GO" id="GO:0042542">
    <property type="term" value="P:response to hydrogen peroxide"/>
    <property type="evidence" value="ECO:0000318"/>
    <property type="project" value="GO_Central"/>
</dbReference>
<dbReference type="GO" id="GO:0009651">
    <property type="term" value="P:response to salt stress"/>
    <property type="evidence" value="ECO:0000318"/>
    <property type="project" value="GO_Central"/>
</dbReference>
<dbReference type="CDD" id="cd06472">
    <property type="entry name" value="ACD_ScHsp26_like"/>
    <property type="match status" value="1"/>
</dbReference>
<dbReference type="FunFam" id="2.60.40.790:FF:000009">
    <property type="entry name" value="17.6 kDa class I heat shock protein-like"/>
    <property type="match status" value="1"/>
</dbReference>
<dbReference type="Gene3D" id="2.60.40.790">
    <property type="match status" value="1"/>
</dbReference>
<dbReference type="InterPro" id="IPR002068">
    <property type="entry name" value="A-crystallin/Hsp20_dom"/>
</dbReference>
<dbReference type="InterPro" id="IPR008978">
    <property type="entry name" value="HSP20-like_chaperone"/>
</dbReference>
<dbReference type="InterPro" id="IPR031107">
    <property type="entry name" value="Small_HSP"/>
</dbReference>
<dbReference type="PANTHER" id="PTHR11527">
    <property type="entry name" value="HEAT-SHOCK PROTEIN 20 FAMILY MEMBER"/>
    <property type="match status" value="1"/>
</dbReference>
<dbReference type="Pfam" id="PF00011">
    <property type="entry name" value="HSP20"/>
    <property type="match status" value="1"/>
</dbReference>
<dbReference type="SUPFAM" id="SSF49764">
    <property type="entry name" value="HSP20-like chaperones"/>
    <property type="match status" value="1"/>
</dbReference>
<dbReference type="PROSITE" id="PS01031">
    <property type="entry name" value="SHSP"/>
    <property type="match status" value="1"/>
</dbReference>
<feature type="chain" id="PRO_0000125984" description="17.3 kDa class I heat shock protein">
    <location>
        <begin position="1"/>
        <end position="153"/>
    </location>
</feature>
<feature type="domain" description="sHSP" evidence="1">
    <location>
        <begin position="39"/>
        <end position="153"/>
    </location>
</feature>
<organism>
    <name type="scientific">Glycine max</name>
    <name type="common">Soybean</name>
    <name type="synonym">Glycine hispida</name>
    <dbReference type="NCBI Taxonomy" id="3847"/>
    <lineage>
        <taxon>Eukaryota</taxon>
        <taxon>Viridiplantae</taxon>
        <taxon>Streptophyta</taxon>
        <taxon>Embryophyta</taxon>
        <taxon>Tracheophyta</taxon>
        <taxon>Spermatophyta</taxon>
        <taxon>Magnoliopsida</taxon>
        <taxon>eudicotyledons</taxon>
        <taxon>Gunneridae</taxon>
        <taxon>Pentapetalae</taxon>
        <taxon>rosids</taxon>
        <taxon>fabids</taxon>
        <taxon>Fabales</taxon>
        <taxon>Fabaceae</taxon>
        <taxon>Papilionoideae</taxon>
        <taxon>50 kb inversion clade</taxon>
        <taxon>NPAAA clade</taxon>
        <taxon>indigoferoid/millettioid clade</taxon>
        <taxon>Phaseoleae</taxon>
        <taxon>Glycine</taxon>
        <taxon>Glycine subgen. Soja</taxon>
    </lineage>
</organism>
<accession>P02519</accession>
<protein>
    <recommendedName>
        <fullName>17.3 kDa class I heat shock protein</fullName>
    </recommendedName>
    <alternativeName>
        <fullName>HSP 17.3</fullName>
    </alternativeName>
</protein>
<evidence type="ECO:0000255" key="1">
    <source>
        <dbReference type="PROSITE-ProRule" id="PRU00285"/>
    </source>
</evidence>
<keyword id="KW-0963">Cytoplasm</keyword>
<keyword id="KW-1185">Reference proteome</keyword>
<keyword id="KW-0346">Stress response</keyword>
<gene>
    <name type="primary">HSP17.3-B</name>
    <name type="synonym">HS6871</name>
</gene>
<reference key="1">
    <citation type="journal article" date="1984" name="EMBO J.">
        <title>The DNA sequence analysis of soybean heat-shock genes and identification of possible regulatory promoter elements.</title>
        <authorList>
            <person name="Schoffl F."/>
            <person name="Raschke E."/>
            <person name="Nagao R.T."/>
        </authorList>
    </citation>
    <scope>NUCLEOTIDE SEQUENCE [GENOMIC DNA]</scope>
</reference>